<name>PIMB_CORGL</name>
<evidence type="ECO:0000250" key="1">
    <source>
        <dbReference type="UniProtKB" id="A0R043"/>
    </source>
</evidence>
<evidence type="ECO:0000269" key="2">
    <source>
    </source>
</evidence>
<evidence type="ECO:0000269" key="3">
    <source>
    </source>
</evidence>
<evidence type="ECO:0000269" key="4">
    <source>
    </source>
</evidence>
<evidence type="ECO:0000269" key="5">
    <source>
    </source>
</evidence>
<evidence type="ECO:0000303" key="6">
    <source>
    </source>
</evidence>
<evidence type="ECO:0000305" key="7"/>
<evidence type="ECO:0000305" key="8">
    <source>
    </source>
</evidence>
<evidence type="ECO:0007829" key="9">
    <source>
        <dbReference type="PDB" id="3OKP"/>
    </source>
</evidence>
<reference key="1">
    <citation type="journal article" date="2003" name="Appl. Microbiol. Biotechnol.">
        <title>The Corynebacterium glutamicum genome: features and impacts on biotechnological processes.</title>
        <authorList>
            <person name="Ikeda M."/>
            <person name="Nakagawa S."/>
        </authorList>
    </citation>
    <scope>NUCLEOTIDE SEQUENCE [LARGE SCALE GENOMIC DNA]</scope>
    <source>
        <strain>ATCC 13032 / DSM 20300 / JCM 1318 / BCRC 11384 / CCUG 27702 / LMG 3730 / NBRC 12168 / NCIMB 10025 / NRRL B-2784 / 534</strain>
    </source>
</reference>
<reference key="2">
    <citation type="journal article" date="2003" name="J. Biotechnol.">
        <title>The complete Corynebacterium glutamicum ATCC 13032 genome sequence and its impact on the production of L-aspartate-derived amino acids and vitamins.</title>
        <authorList>
            <person name="Kalinowski J."/>
            <person name="Bathe B."/>
            <person name="Bartels D."/>
            <person name="Bischoff N."/>
            <person name="Bott M."/>
            <person name="Burkovski A."/>
            <person name="Dusch N."/>
            <person name="Eggeling L."/>
            <person name="Eikmanns B.J."/>
            <person name="Gaigalat L."/>
            <person name="Goesmann A."/>
            <person name="Hartmann M."/>
            <person name="Huthmacher K."/>
            <person name="Kraemer R."/>
            <person name="Linke B."/>
            <person name="McHardy A.C."/>
            <person name="Meyer F."/>
            <person name="Moeckel B."/>
            <person name="Pfefferle W."/>
            <person name="Puehler A."/>
            <person name="Rey D.A."/>
            <person name="Rueckert C."/>
            <person name="Rupp O."/>
            <person name="Sahm H."/>
            <person name="Wendisch V.F."/>
            <person name="Wiegraebe I."/>
            <person name="Tauch A."/>
        </authorList>
    </citation>
    <scope>NUCLEOTIDE SEQUENCE [LARGE SCALE GENOMIC DNA]</scope>
    <source>
        <strain>ATCC 13032 / DSM 20300 / JCM 1318 / BCRC 11384 / CCUG 27702 / LMG 3730 / NBRC 12168 / NCIMB 10025 / NRRL B-2784 / 534</strain>
    </source>
</reference>
<reference key="3">
    <citation type="journal article" date="2008" name="Antonie Van Leeuwenhoek">
        <title>Structural characterization and functional properties of a novel lipomannan variant isolated from a Corynebacterium glutamicum pimB' mutant.</title>
        <authorList>
            <person name="Mishra A.K."/>
            <person name="Klein C."/>
            <person name="Gurcha S.S."/>
            <person name="Alderwick L.J."/>
            <person name="Babu P."/>
            <person name="Hitchen P.G."/>
            <person name="Morris H.R."/>
            <person name="Dell A."/>
            <person name="Besra G.S."/>
            <person name="Eggeling L."/>
        </authorList>
    </citation>
    <scope>FUNCTION</scope>
    <scope>DISRUPTION PHENOTYPE</scope>
    <source>
        <strain>ATCC 13032 / DSM 20300 / JCM 1318 / BCRC 11384 / CCUG 27702 / LMG 3730 / NBRC 12168 / NCIMB 10025 / NRRL B-2784 / 534</strain>
    </source>
</reference>
<reference key="4">
    <citation type="journal article" date="2008" name="J. Biol. Chem.">
        <title>Analysis of a new mannosyltransferase required for the synthesis of phosphatidylinositol mannosides and lipoarbinomannan reveals two lipomannan pools in corynebacterineae.</title>
        <authorList>
            <person name="Lea-Smith D.J."/>
            <person name="Martin K.L."/>
            <person name="Pyke J.S."/>
            <person name="Tull D."/>
            <person name="McConville M.J."/>
            <person name="Coppel R.L."/>
            <person name="Crellin P.K."/>
        </authorList>
    </citation>
    <scope>FUNCTION</scope>
    <scope>DISRUPTION PHENOTYPE</scope>
    <source>
        <strain>ATCC 13032 / DSM 20300 / JCM 1318 / BCRC 11384 / CCUG 27702 / LMG 3730 / NBRC 12168 / NCIMB 10025 / NRRL B-2784 / 534</strain>
    </source>
</reference>
<reference key="5">
    <citation type="journal article" date="2009" name="J. Bacteriol.">
        <title>Characterization of the Corynebacterium glutamicum deltapimB' deltamgtA double deletion mutant and the role of Mycobacterium tuberculosis orthologues Rv2188c and Rv0557 in glycolipid biosynthesis.</title>
        <authorList>
            <person name="Mishra A.K."/>
            <person name="Batt S."/>
            <person name="Krumbach K."/>
            <person name="Eggeling L."/>
            <person name="Besra G.S."/>
        </authorList>
    </citation>
    <scope>FUNCTION IN AC1PIM2 BIOSYNTHESIS</scope>
    <scope>CATALYTIC ACTIVITY</scope>
    <scope>PATHWAY</scope>
    <scope>NOMENCLATURE</scope>
    <source>
        <strain>ATCC 13032 / DSM 20300 / JCM 1318 / BCRC 11384 / CCUG 27702 / LMG 3730 / NBRC 12168 / NCIMB 10025 / NRRL B-2784 / 534</strain>
    </source>
</reference>
<reference key="6">
    <citation type="journal article" date="2010" name="J. Biol. Chem.">
        <title>Acceptor substrate discrimination in phosphatidyl-myo-inositol mannoside synthesis: structural and mutational analysis of mannosyltransferase Corynebacterium glutamicum PimB'.</title>
        <authorList>
            <person name="Batt S.M."/>
            <person name="Jabeen T."/>
            <person name="Mishra A.K."/>
            <person name="Veerapen N."/>
            <person name="Krumbach K."/>
            <person name="Eggeling L."/>
            <person name="Besra G.S."/>
            <person name="Futterer K."/>
        </authorList>
    </citation>
    <scope>X-RAY CRYSTALLOGRAPHY (2.00 ANGSTROMS) IN COMPLEX WITH GDP-MANNOSE</scope>
    <scope>MUTAGENESIS OF GLU-290 AND GLY-291</scope>
</reference>
<feature type="chain" id="PRO_0000393734" description="GDP-mannose-dependent monoacylated alpha-(1-6)-phosphatidylinositol monomannoside mannosyltransferase">
    <location>
        <begin position="1"/>
        <end position="381"/>
    </location>
</feature>
<feature type="binding site" evidence="5">
    <location>
        <position position="206"/>
    </location>
    <ligand>
        <name>GDP-alpha-D-mannose</name>
        <dbReference type="ChEBI" id="CHEBI:57527"/>
    </ligand>
</feature>
<feature type="binding site" evidence="5">
    <location>
        <position position="211"/>
    </location>
    <ligand>
        <name>GDP-alpha-D-mannose</name>
        <dbReference type="ChEBI" id="CHEBI:57527"/>
    </ligand>
</feature>
<feature type="binding site" evidence="5">
    <location>
        <position position="261"/>
    </location>
    <ligand>
        <name>GDP-alpha-D-mannose</name>
        <dbReference type="ChEBI" id="CHEBI:57527"/>
    </ligand>
</feature>
<feature type="binding site" evidence="5">
    <location>
        <position position="298"/>
    </location>
    <ligand>
        <name>GDP-alpha-D-mannose</name>
        <dbReference type="ChEBI" id="CHEBI:57527"/>
    </ligand>
</feature>
<feature type="mutagenesis site" description="Reduces mannosyltransferase activity by more than 95%, and weakens but do not abrogate binding of GDP-mannose." evidence="5">
    <original>E</original>
    <variation>D</variation>
    <location>
        <position position="290"/>
    </location>
</feature>
<feature type="mutagenesis site" description="Reduces mannosyltransferase activity by more than 95%." evidence="5">
    <original>G</original>
    <variation>S</variation>
    <location>
        <position position="291"/>
    </location>
</feature>
<feature type="strand" evidence="9">
    <location>
        <begin position="7"/>
        <end position="12"/>
    </location>
</feature>
<feature type="helix" evidence="9">
    <location>
        <begin position="20"/>
        <end position="29"/>
    </location>
</feature>
<feature type="helix" evidence="9">
    <location>
        <begin position="34"/>
        <end position="36"/>
    </location>
</feature>
<feature type="strand" evidence="9">
    <location>
        <begin position="37"/>
        <end position="42"/>
    </location>
</feature>
<feature type="helix" evidence="9">
    <location>
        <begin position="46"/>
        <end position="53"/>
    </location>
</feature>
<feature type="strand" evidence="9">
    <location>
        <begin position="57"/>
        <end position="67"/>
    </location>
</feature>
<feature type="helix" evidence="9">
    <location>
        <begin position="72"/>
        <end position="84"/>
    </location>
</feature>
<feature type="strand" evidence="9">
    <location>
        <begin position="88"/>
        <end position="94"/>
    </location>
</feature>
<feature type="helix" evidence="9">
    <location>
        <begin position="98"/>
        <end position="101"/>
    </location>
</feature>
<feature type="helix" evidence="9">
    <location>
        <begin position="102"/>
        <end position="107"/>
    </location>
</feature>
<feature type="strand" evidence="9">
    <location>
        <begin position="111"/>
        <end position="116"/>
    </location>
</feature>
<feature type="helix" evidence="9">
    <location>
        <begin position="121"/>
        <end position="124"/>
    </location>
</feature>
<feature type="helix" evidence="9">
    <location>
        <begin position="128"/>
        <end position="140"/>
    </location>
</feature>
<feature type="strand" evidence="9">
    <location>
        <begin position="142"/>
        <end position="147"/>
    </location>
</feature>
<feature type="helix" evidence="9">
    <location>
        <begin position="149"/>
        <end position="159"/>
    </location>
</feature>
<feature type="strand" evidence="9">
    <location>
        <begin position="161"/>
        <end position="167"/>
    </location>
</feature>
<feature type="turn" evidence="9">
    <location>
        <begin position="174"/>
        <end position="176"/>
    </location>
</feature>
<feature type="helix" evidence="9">
    <location>
        <begin position="182"/>
        <end position="191"/>
    </location>
</feature>
<feature type="strand" evidence="9">
    <location>
        <begin position="200"/>
        <end position="205"/>
    </location>
</feature>
<feature type="helix" evidence="9">
    <location>
        <begin position="209"/>
        <end position="211"/>
    </location>
</feature>
<feature type="helix" evidence="9">
    <location>
        <begin position="213"/>
        <end position="226"/>
    </location>
</feature>
<feature type="strand" evidence="9">
    <location>
        <begin position="231"/>
        <end position="235"/>
    </location>
</feature>
<feature type="helix" evidence="9">
    <location>
        <begin position="241"/>
        <end position="247"/>
    </location>
</feature>
<feature type="helix" evidence="9">
    <location>
        <begin position="249"/>
        <end position="254"/>
    </location>
</feature>
<feature type="strand" evidence="9">
    <location>
        <begin position="255"/>
        <end position="260"/>
    </location>
</feature>
<feature type="helix" evidence="9">
    <location>
        <begin position="263"/>
        <end position="272"/>
    </location>
</feature>
<feature type="strand" evidence="9">
    <location>
        <begin position="274"/>
        <end position="278"/>
    </location>
</feature>
<feature type="helix" evidence="9">
    <location>
        <begin position="284"/>
        <end position="286"/>
    </location>
</feature>
<feature type="helix" evidence="9">
    <location>
        <begin position="294"/>
        <end position="301"/>
    </location>
</feature>
<feature type="strand" evidence="9">
    <location>
        <begin position="306"/>
        <end position="308"/>
    </location>
</feature>
<feature type="helix" evidence="9">
    <location>
        <begin position="314"/>
        <end position="317"/>
    </location>
</feature>
<feature type="turn" evidence="9">
    <location>
        <begin position="320"/>
        <end position="322"/>
    </location>
</feature>
<feature type="strand" evidence="9">
    <location>
        <begin position="323"/>
        <end position="325"/>
    </location>
</feature>
<feature type="helix" evidence="9">
    <location>
        <begin position="331"/>
        <end position="342"/>
    </location>
</feature>
<feature type="helix" evidence="9">
    <location>
        <begin position="345"/>
        <end position="362"/>
    </location>
</feature>
<feature type="helix" evidence="9">
    <location>
        <begin position="365"/>
        <end position="377"/>
    </location>
</feature>
<organism>
    <name type="scientific">Corynebacterium glutamicum (strain ATCC 13032 / DSM 20300 / JCM 1318 / BCRC 11384 / CCUG 27702 / LMG 3730 / NBRC 12168 / NCIMB 10025 / NRRL B-2784 / 534)</name>
    <dbReference type="NCBI Taxonomy" id="196627"/>
    <lineage>
        <taxon>Bacteria</taxon>
        <taxon>Bacillati</taxon>
        <taxon>Actinomycetota</taxon>
        <taxon>Actinomycetes</taxon>
        <taxon>Mycobacteriales</taxon>
        <taxon>Corynebacteriaceae</taxon>
        <taxon>Corynebacterium</taxon>
    </lineage>
</organism>
<dbReference type="EC" id="2.4.1.346" evidence="8"/>
<dbReference type="EMBL" id="BA000036">
    <property type="protein sequence ID" value="BAB99579.1"/>
    <property type="molecule type" value="Genomic_DNA"/>
</dbReference>
<dbReference type="EMBL" id="BX927154">
    <property type="protein sequence ID" value="CAF20527.1"/>
    <property type="molecule type" value="Genomic_DNA"/>
</dbReference>
<dbReference type="RefSeq" id="NP_601390.1">
    <property type="nucleotide sequence ID" value="NC_003450.3"/>
</dbReference>
<dbReference type="RefSeq" id="WP_011014943.1">
    <property type="nucleotide sequence ID" value="NC_006958.1"/>
</dbReference>
<dbReference type="PDB" id="3OKA">
    <property type="method" value="X-ray"/>
    <property type="resolution" value="2.20 A"/>
    <property type="chains" value="A/B=1-381"/>
</dbReference>
<dbReference type="PDB" id="3OKC">
    <property type="method" value="X-ray"/>
    <property type="resolution" value="2.40 A"/>
    <property type="chains" value="A=1-381"/>
</dbReference>
<dbReference type="PDB" id="3OKP">
    <property type="method" value="X-ray"/>
    <property type="resolution" value="2.00 A"/>
    <property type="chains" value="A=1-381"/>
</dbReference>
<dbReference type="PDBsum" id="3OKA"/>
<dbReference type="PDBsum" id="3OKC"/>
<dbReference type="PDBsum" id="3OKP"/>
<dbReference type="SMR" id="Q8NNK8"/>
<dbReference type="STRING" id="196627.cg2400"/>
<dbReference type="CAZy" id="GT4">
    <property type="family name" value="Glycosyltransferase Family 4"/>
</dbReference>
<dbReference type="GeneID" id="1020138"/>
<dbReference type="KEGG" id="cgb:cg2400"/>
<dbReference type="KEGG" id="cgl:Cgl2186"/>
<dbReference type="PATRIC" id="fig|196627.13.peg.2123"/>
<dbReference type="eggNOG" id="COG0438">
    <property type="taxonomic scope" value="Bacteria"/>
</dbReference>
<dbReference type="HOGENOM" id="CLU_009583_2_5_11"/>
<dbReference type="OrthoDB" id="9808602at2"/>
<dbReference type="BioCyc" id="CORYNE:G18NG-11778-MONOMER"/>
<dbReference type="BRENDA" id="2.4.1.346">
    <property type="organism ID" value="960"/>
</dbReference>
<dbReference type="UniPathway" id="UPA00949"/>
<dbReference type="EvolutionaryTrace" id="Q8NNK8"/>
<dbReference type="PRO" id="PR:Q8NNK8"/>
<dbReference type="Proteomes" id="UP000000582">
    <property type="component" value="Chromosome"/>
</dbReference>
<dbReference type="Proteomes" id="UP000001009">
    <property type="component" value="Chromosome"/>
</dbReference>
<dbReference type="GO" id="GO:0016020">
    <property type="term" value="C:membrane"/>
    <property type="evidence" value="ECO:0007669"/>
    <property type="project" value="GOC"/>
</dbReference>
<dbReference type="GO" id="GO:0033164">
    <property type="term" value="F:glycolipid 1,6-alpha-mannosyltransferase activity"/>
    <property type="evidence" value="ECO:0000314"/>
    <property type="project" value="UniProtKB"/>
</dbReference>
<dbReference type="GO" id="GO:0043750">
    <property type="term" value="F:phosphatidylinositol alpha-mannosyltransferase activity"/>
    <property type="evidence" value="ECO:0000314"/>
    <property type="project" value="UniProtKB"/>
</dbReference>
<dbReference type="GO" id="GO:0009247">
    <property type="term" value="P:glycolipid biosynthetic process"/>
    <property type="evidence" value="ECO:0000314"/>
    <property type="project" value="UniProtKB"/>
</dbReference>
<dbReference type="GO" id="GO:0046488">
    <property type="term" value="P:phosphatidylinositol metabolic process"/>
    <property type="evidence" value="ECO:0007669"/>
    <property type="project" value="UniProtKB-UniPathway"/>
</dbReference>
<dbReference type="GO" id="GO:0008654">
    <property type="term" value="P:phospholipid biosynthetic process"/>
    <property type="evidence" value="ECO:0007669"/>
    <property type="project" value="UniProtKB-KW"/>
</dbReference>
<dbReference type="CDD" id="cd03801">
    <property type="entry name" value="GT4_PimA-like"/>
    <property type="match status" value="1"/>
</dbReference>
<dbReference type="FunFam" id="3.40.50.2000:FF:000069">
    <property type="entry name" value="Alpha-(1-6)-phosphatidylinositol monomannoside mannosyltransferase"/>
    <property type="match status" value="1"/>
</dbReference>
<dbReference type="FunFam" id="3.40.50.2000:FF:000115">
    <property type="entry name" value="Alpha-(1-6)-phosphatidylinositol monomannoside mannosyltransferase"/>
    <property type="match status" value="1"/>
</dbReference>
<dbReference type="Gene3D" id="3.40.50.2000">
    <property type="entry name" value="Glycogen Phosphorylase B"/>
    <property type="match status" value="2"/>
</dbReference>
<dbReference type="InterPro" id="IPR001296">
    <property type="entry name" value="Glyco_trans_1"/>
</dbReference>
<dbReference type="InterPro" id="IPR028098">
    <property type="entry name" value="Glyco_trans_4-like_N"/>
</dbReference>
<dbReference type="InterPro" id="IPR050194">
    <property type="entry name" value="Glycosyltransferase_grp1"/>
</dbReference>
<dbReference type="PANTHER" id="PTHR45947">
    <property type="entry name" value="SULFOQUINOVOSYL TRANSFERASE SQD2"/>
    <property type="match status" value="1"/>
</dbReference>
<dbReference type="PANTHER" id="PTHR45947:SF3">
    <property type="entry name" value="SULFOQUINOVOSYL TRANSFERASE SQD2"/>
    <property type="match status" value="1"/>
</dbReference>
<dbReference type="Pfam" id="PF13439">
    <property type="entry name" value="Glyco_transf_4"/>
    <property type="match status" value="1"/>
</dbReference>
<dbReference type="Pfam" id="PF00534">
    <property type="entry name" value="Glycos_transf_1"/>
    <property type="match status" value="1"/>
</dbReference>
<dbReference type="SUPFAM" id="SSF53756">
    <property type="entry name" value="UDP-Glycosyltransferase/glycogen phosphorylase"/>
    <property type="match status" value="1"/>
</dbReference>
<gene>
    <name evidence="6" type="primary">pimB</name>
    <name type="ordered locus">Cgl2186</name>
    <name type="ordered locus">cg2400</name>
</gene>
<accession>Q8NNK8</accession>
<accession>Q6M3P7</accession>
<comment type="function">
    <text evidence="1 2 3 4">Involved in the biosynthesis of phosphatidyl-myo-inositol mannosides (PIM) which are early precursors in the biosynthesis of lipomannans (LM) and lipoarabinomannans (LAM) (PubMed:18178556, PubMed:18421567, PubMed:19395496). Catalyzes the addition of a mannosyl residue from GDP-D-mannose (GDP-Man) to the position 6 of a phosphatidyl-myo-inositol bearing an alpha-1,2-linked mannose residue (PIM1) to generate phosphatidyl-myo-inositol bearing alpha-1,2- and alpha-1,6-linked mannose residues (Ac1PIM2) (PubMed:18178556, PubMed:19395496). PimB also catalyzes the addition of a mannosyl residue from GDP-Man to the position 6 of phosphatidyl-myo-inositol bearing an acylated alpha-1,2-linked mannose residue (Ac1PIM1) to generate monoacylated phosphatidyl-myo-inositol bearing alpha-1,2- and alpha-1,6-linked mannose residues (Ac1PIM2) (By similarity). The addition of the second mannosyl residue by PimB preferentially occurs before the acylation of the mannosyl residue transferred by PimA (By similarity). Also able to transfer a mannosyl residue from GDP-Man to the position 6 of a phosphatidyl-myo-inositol (PI), but this reaction is very slow (By similarity).</text>
</comment>
<comment type="catalytic activity">
    <reaction evidence="8">
        <text>a 1,2-diacyl-sn-glycero-3-phospho-[alpha-D-mannopyranosyl-(1&lt;-&gt;6)-D-myo-inositol] + GDP-alpha-D-mannose = a 2,6-O-bis(alpha-D-mannopyranosyl)-1-phosphatidyl-1D-myo-inositol + GDP + H(+)</text>
        <dbReference type="Rhea" id="RHEA:52440"/>
        <dbReference type="ChEBI" id="CHEBI:15378"/>
        <dbReference type="ChEBI" id="CHEBI:57527"/>
        <dbReference type="ChEBI" id="CHEBI:58189"/>
        <dbReference type="ChEBI" id="CHEBI:87673"/>
        <dbReference type="ChEBI" id="CHEBI:136624"/>
        <dbReference type="EC" id="2.4.1.346"/>
    </reaction>
</comment>
<comment type="catalytic activity">
    <reaction evidence="8">
        <text>a 1,2-diacyl-sn-glycero-3-phospho-[alpha-D-6-acyl-mannopyranosyl-(1&lt;-&gt;6)-D-myo-inositol] + GDP-alpha-D-mannose = a 2-O-(alpha-D-mannosyl)-6-O-(6-O-acyl-alpha-D-mannosyl)-1-phosphatidyl-1D-myo-inositol + GDP + H(+)</text>
        <dbReference type="Rhea" id="RHEA:52444"/>
        <dbReference type="ChEBI" id="CHEBI:15378"/>
        <dbReference type="ChEBI" id="CHEBI:57527"/>
        <dbReference type="ChEBI" id="CHEBI:58189"/>
        <dbReference type="ChEBI" id="CHEBI:88053"/>
        <dbReference type="ChEBI" id="CHEBI:136625"/>
        <dbReference type="EC" id="2.4.1.346"/>
    </reaction>
</comment>
<comment type="pathway">
    <text evidence="8">Phospholipid metabolism; phosphatidylinositol metabolism.</text>
</comment>
<comment type="disruption phenotype">
    <text evidence="2 3">Cells lacking this gene are unable to produce monoacylated phosphatidyl-myo-inositol dimannoside (Ac1PIM2) resulting in the accumulation of Ac1PIM1, the absence of LAM and LM-A, and the presence of LM-B.</text>
</comment>
<comment type="similarity">
    <text evidence="7">Belongs to the glycosyltransferase group 1 family. Glycosyltransferase 4 subfamily.</text>
</comment>
<protein>
    <recommendedName>
        <fullName evidence="6">GDP-mannose-dependent monoacylated alpha-(1-6)-phosphatidylinositol monomannoside mannosyltransferase</fullName>
        <ecNumber evidence="8">2.4.1.346</ecNumber>
    </recommendedName>
    <alternativeName>
        <fullName evidence="6">Alpha-D-mannose-alpha-(1-6)-phosphatidylmyo-inositol-mannosyltransferase</fullName>
    </alternativeName>
    <alternativeName>
        <fullName evidence="6">Alpha-mannosyltransferase</fullName>
        <shortName evidence="6">Alpha-ManT</shortName>
    </alternativeName>
    <alternativeName>
        <fullName evidence="6">Guanosine diphosphomannose-phosphatidyl-inositol alpha-mannosyltransferase</fullName>
    </alternativeName>
    <alternativeName>
        <fullName evidence="6">Phosphatidylinositol alpha-mannosyltransferase</fullName>
        <shortName evidence="6">PI alpha-mannosyltransferase</shortName>
    </alternativeName>
</protein>
<keyword id="KW-0002">3D-structure</keyword>
<keyword id="KW-0328">Glycosyltransferase</keyword>
<keyword id="KW-0444">Lipid biosynthesis</keyword>
<keyword id="KW-0443">Lipid metabolism</keyword>
<keyword id="KW-0594">Phospholipid biosynthesis</keyword>
<keyword id="KW-1208">Phospholipid metabolism</keyword>
<keyword id="KW-1185">Reference proteome</keyword>
<keyword id="KW-0808">Transferase</keyword>
<proteinExistence type="evidence at protein level"/>
<sequence>MSASRKTLVVTNDFPPRIGGIQSYLRDFIATQDPESIVVFASTQNAEEAHAYDKTLDYEVIRWPRSVMLPTPTTAHAMAEIIREREIDNVWFGAAAPLALMAGTAKQAGASKVIASTHGHEVGWSMLPGSRQSLRKIGTEVDVLTYISQYTLRRFKSAFGSHPTFEHLPSGVDVKRFTPATPEDKSATRKKLGFTDTTPVIACNSRLVPRKGQDSLIKAMPQVIAARPDAQLLIVGSGRYESTLRRLATDVSQNVKFLGRLEYQDMINTLAAADIFAMPARTRGGGLDVEGLGIVYLEAQACGVPVIAGTSGGAPETVTPATGLVVEGSDVDKLSELLIELLDDPIRRAAMGAAGRAHVEAEWSWEIMGERLTNILQSEPR</sequence>